<sequence length="335" mass="37063">MATIIYDDETTFDALKDRTIAVMGYGSQGHAHARNLHESGLNVIVGLRQGSSSWAKAESDGLKVMTVDDASRAADVIMILLPDEKQAAVYYSQIEPNLKAGDALVFAHGFNIHYNQIVPPKDVDVFMVAPKGPGHIVRRTYTEGIGVPGLIAVYQDATGKARDLALSYAKGIGATRAGVYETTFREETETDLFGEQVDLCGGLSALIKTAFEVLVEAGYQPEMAYFETCHEVKLIVDLIYEGGLERMWHSVSNTAEYGGMTVGPRVINEYSREAMYEALERIQNGEFAKEFVLEGMVNHPVLKAMERQEKEHQLEVVGKQIRANIPWLNKKIDDD</sequence>
<reference key="1">
    <citation type="journal article" date="2002" name="J. Mol. Microbiol. Biotechnol.">
        <title>The genome of Methanosarcina mazei: evidence for lateral gene transfer between Bacteria and Archaea.</title>
        <authorList>
            <person name="Deppenmeier U."/>
            <person name="Johann A."/>
            <person name="Hartsch T."/>
            <person name="Merkl R."/>
            <person name="Schmitz R.A."/>
            <person name="Martinez-Arias R."/>
            <person name="Henne A."/>
            <person name="Wiezer A."/>
            <person name="Baeumer S."/>
            <person name="Jacobi C."/>
            <person name="Brueggemann H."/>
            <person name="Lienard T."/>
            <person name="Christmann A."/>
            <person name="Boemecke M."/>
            <person name="Steckel S."/>
            <person name="Bhattacharyya A."/>
            <person name="Lykidis A."/>
            <person name="Overbeek R."/>
            <person name="Klenk H.-P."/>
            <person name="Gunsalus R.P."/>
            <person name="Fritz H.-J."/>
            <person name="Gottschalk G."/>
        </authorList>
    </citation>
    <scope>NUCLEOTIDE SEQUENCE [LARGE SCALE GENOMIC DNA]</scope>
    <source>
        <strain>ATCC BAA-159 / DSM 3647 / Goe1 / Go1 / JCM 11833 / OCM 88</strain>
    </source>
</reference>
<proteinExistence type="inferred from homology"/>
<feature type="chain" id="PRO_0000151393" description="Ketol-acid reductoisomerase (NADP(+))">
    <location>
        <begin position="1"/>
        <end position="335"/>
    </location>
</feature>
<feature type="domain" description="KARI N-terminal Rossmann" evidence="2">
    <location>
        <begin position="1"/>
        <end position="182"/>
    </location>
</feature>
<feature type="domain" description="KARI C-terminal knotted" evidence="3">
    <location>
        <begin position="183"/>
        <end position="328"/>
    </location>
</feature>
<feature type="active site" evidence="1">
    <location>
        <position position="108"/>
    </location>
</feature>
<feature type="binding site" evidence="1">
    <location>
        <begin position="25"/>
        <end position="28"/>
    </location>
    <ligand>
        <name>NADP(+)</name>
        <dbReference type="ChEBI" id="CHEBI:58349"/>
    </ligand>
</feature>
<feature type="binding site" evidence="1">
    <location>
        <position position="48"/>
    </location>
    <ligand>
        <name>NADP(+)</name>
        <dbReference type="ChEBI" id="CHEBI:58349"/>
    </ligand>
</feature>
<feature type="binding site" evidence="1">
    <location>
        <position position="51"/>
    </location>
    <ligand>
        <name>NADP(+)</name>
        <dbReference type="ChEBI" id="CHEBI:58349"/>
    </ligand>
</feature>
<feature type="binding site" evidence="1">
    <location>
        <position position="53"/>
    </location>
    <ligand>
        <name>NADP(+)</name>
        <dbReference type="ChEBI" id="CHEBI:58349"/>
    </ligand>
</feature>
<feature type="binding site" evidence="1">
    <location>
        <begin position="83"/>
        <end position="86"/>
    </location>
    <ligand>
        <name>NADP(+)</name>
        <dbReference type="ChEBI" id="CHEBI:58349"/>
    </ligand>
</feature>
<feature type="binding site" evidence="1">
    <location>
        <position position="134"/>
    </location>
    <ligand>
        <name>NADP(+)</name>
        <dbReference type="ChEBI" id="CHEBI:58349"/>
    </ligand>
</feature>
<feature type="binding site" evidence="1">
    <location>
        <position position="191"/>
    </location>
    <ligand>
        <name>Mg(2+)</name>
        <dbReference type="ChEBI" id="CHEBI:18420"/>
        <label>1</label>
    </ligand>
</feature>
<feature type="binding site" evidence="1">
    <location>
        <position position="191"/>
    </location>
    <ligand>
        <name>Mg(2+)</name>
        <dbReference type="ChEBI" id="CHEBI:18420"/>
        <label>2</label>
    </ligand>
</feature>
<feature type="binding site" evidence="1">
    <location>
        <position position="195"/>
    </location>
    <ligand>
        <name>Mg(2+)</name>
        <dbReference type="ChEBI" id="CHEBI:18420"/>
        <label>1</label>
    </ligand>
</feature>
<feature type="binding site" evidence="1">
    <location>
        <position position="227"/>
    </location>
    <ligand>
        <name>Mg(2+)</name>
        <dbReference type="ChEBI" id="CHEBI:18420"/>
        <label>2</label>
    </ligand>
</feature>
<feature type="binding site" evidence="1">
    <location>
        <position position="231"/>
    </location>
    <ligand>
        <name>Mg(2+)</name>
        <dbReference type="ChEBI" id="CHEBI:18420"/>
        <label>2</label>
    </ligand>
</feature>
<feature type="binding site" evidence="1">
    <location>
        <position position="252"/>
    </location>
    <ligand>
        <name>substrate</name>
    </ligand>
</feature>
<accession>Q8PZ26</accession>
<protein>
    <recommendedName>
        <fullName evidence="1">Ketol-acid reductoisomerase (NADP(+))</fullName>
        <shortName evidence="1">KARI</shortName>
        <ecNumber evidence="1">1.1.1.86</ecNumber>
    </recommendedName>
    <alternativeName>
        <fullName evidence="1">Acetohydroxy-acid isomeroreductase</fullName>
        <shortName evidence="1">AHIR</shortName>
    </alternativeName>
    <alternativeName>
        <fullName evidence="1">Alpha-keto-beta-hydroxylacyl reductoisomerase</fullName>
    </alternativeName>
    <alternativeName>
        <fullName evidence="1">Ketol-acid reductoisomerase type 1</fullName>
    </alternativeName>
    <alternativeName>
        <fullName evidence="1">Ketol-acid reductoisomerase type I</fullName>
    </alternativeName>
</protein>
<dbReference type="EC" id="1.1.1.86" evidence="1"/>
<dbReference type="EMBL" id="AE008384">
    <property type="protein sequence ID" value="AAM30364.1"/>
    <property type="molecule type" value="Genomic_DNA"/>
</dbReference>
<dbReference type="RefSeq" id="WP_011032619.1">
    <property type="nucleotide sequence ID" value="NC_003901.1"/>
</dbReference>
<dbReference type="SMR" id="Q8PZ26"/>
<dbReference type="GeneID" id="82159685"/>
<dbReference type="KEGG" id="mma:MM_0668"/>
<dbReference type="PATRIC" id="fig|192952.21.peg.792"/>
<dbReference type="eggNOG" id="arCOG04465">
    <property type="taxonomic scope" value="Archaea"/>
</dbReference>
<dbReference type="HOGENOM" id="CLU_033821_0_1_2"/>
<dbReference type="UniPathway" id="UPA00047">
    <property type="reaction ID" value="UER00056"/>
</dbReference>
<dbReference type="UniPathway" id="UPA00049">
    <property type="reaction ID" value="UER00060"/>
</dbReference>
<dbReference type="Proteomes" id="UP000000595">
    <property type="component" value="Chromosome"/>
</dbReference>
<dbReference type="GO" id="GO:0004455">
    <property type="term" value="F:ketol-acid reductoisomerase activity"/>
    <property type="evidence" value="ECO:0007669"/>
    <property type="project" value="UniProtKB-UniRule"/>
</dbReference>
<dbReference type="GO" id="GO:0000287">
    <property type="term" value="F:magnesium ion binding"/>
    <property type="evidence" value="ECO:0007669"/>
    <property type="project" value="UniProtKB-UniRule"/>
</dbReference>
<dbReference type="GO" id="GO:0050661">
    <property type="term" value="F:NADP binding"/>
    <property type="evidence" value="ECO:0007669"/>
    <property type="project" value="InterPro"/>
</dbReference>
<dbReference type="GO" id="GO:0009097">
    <property type="term" value="P:isoleucine biosynthetic process"/>
    <property type="evidence" value="ECO:0007669"/>
    <property type="project" value="UniProtKB-UniRule"/>
</dbReference>
<dbReference type="GO" id="GO:0009099">
    <property type="term" value="P:L-valine biosynthetic process"/>
    <property type="evidence" value="ECO:0007669"/>
    <property type="project" value="UniProtKB-UniRule"/>
</dbReference>
<dbReference type="FunFam" id="3.40.50.720:FF:000023">
    <property type="entry name" value="Ketol-acid reductoisomerase (NADP(+))"/>
    <property type="match status" value="1"/>
</dbReference>
<dbReference type="Gene3D" id="6.10.240.10">
    <property type="match status" value="1"/>
</dbReference>
<dbReference type="Gene3D" id="3.40.50.720">
    <property type="entry name" value="NAD(P)-binding Rossmann-like Domain"/>
    <property type="match status" value="1"/>
</dbReference>
<dbReference type="HAMAP" id="MF_00435">
    <property type="entry name" value="IlvC"/>
    <property type="match status" value="1"/>
</dbReference>
<dbReference type="InterPro" id="IPR008927">
    <property type="entry name" value="6-PGluconate_DH-like_C_sf"/>
</dbReference>
<dbReference type="InterPro" id="IPR013023">
    <property type="entry name" value="KARI"/>
</dbReference>
<dbReference type="InterPro" id="IPR000506">
    <property type="entry name" value="KARI_C"/>
</dbReference>
<dbReference type="InterPro" id="IPR013116">
    <property type="entry name" value="KARI_N"/>
</dbReference>
<dbReference type="InterPro" id="IPR014359">
    <property type="entry name" value="KARI_prok"/>
</dbReference>
<dbReference type="InterPro" id="IPR036291">
    <property type="entry name" value="NAD(P)-bd_dom_sf"/>
</dbReference>
<dbReference type="NCBIfam" id="TIGR00465">
    <property type="entry name" value="ilvC"/>
    <property type="match status" value="1"/>
</dbReference>
<dbReference type="NCBIfam" id="NF004017">
    <property type="entry name" value="PRK05479.1"/>
    <property type="match status" value="1"/>
</dbReference>
<dbReference type="NCBIfam" id="NF009940">
    <property type="entry name" value="PRK13403.1"/>
    <property type="match status" value="1"/>
</dbReference>
<dbReference type="PANTHER" id="PTHR21371">
    <property type="entry name" value="KETOL-ACID REDUCTOISOMERASE, MITOCHONDRIAL"/>
    <property type="match status" value="1"/>
</dbReference>
<dbReference type="PANTHER" id="PTHR21371:SF1">
    <property type="entry name" value="KETOL-ACID REDUCTOISOMERASE, MITOCHONDRIAL"/>
    <property type="match status" value="1"/>
</dbReference>
<dbReference type="Pfam" id="PF01450">
    <property type="entry name" value="KARI_C"/>
    <property type="match status" value="1"/>
</dbReference>
<dbReference type="Pfam" id="PF07991">
    <property type="entry name" value="KARI_N"/>
    <property type="match status" value="1"/>
</dbReference>
<dbReference type="PIRSF" id="PIRSF000116">
    <property type="entry name" value="IlvC_gammaproteo"/>
    <property type="match status" value="1"/>
</dbReference>
<dbReference type="SUPFAM" id="SSF48179">
    <property type="entry name" value="6-phosphogluconate dehydrogenase C-terminal domain-like"/>
    <property type="match status" value="1"/>
</dbReference>
<dbReference type="SUPFAM" id="SSF51735">
    <property type="entry name" value="NAD(P)-binding Rossmann-fold domains"/>
    <property type="match status" value="1"/>
</dbReference>
<dbReference type="PROSITE" id="PS51851">
    <property type="entry name" value="KARI_C"/>
    <property type="match status" value="1"/>
</dbReference>
<dbReference type="PROSITE" id="PS51850">
    <property type="entry name" value="KARI_N"/>
    <property type="match status" value="1"/>
</dbReference>
<organism>
    <name type="scientific">Methanosarcina mazei (strain ATCC BAA-159 / DSM 3647 / Goe1 / Go1 / JCM 11833 / OCM 88)</name>
    <name type="common">Methanosarcina frisia</name>
    <dbReference type="NCBI Taxonomy" id="192952"/>
    <lineage>
        <taxon>Archaea</taxon>
        <taxon>Methanobacteriati</taxon>
        <taxon>Methanobacteriota</taxon>
        <taxon>Stenosarchaea group</taxon>
        <taxon>Methanomicrobia</taxon>
        <taxon>Methanosarcinales</taxon>
        <taxon>Methanosarcinaceae</taxon>
        <taxon>Methanosarcina</taxon>
    </lineage>
</organism>
<evidence type="ECO:0000255" key="1">
    <source>
        <dbReference type="HAMAP-Rule" id="MF_00435"/>
    </source>
</evidence>
<evidence type="ECO:0000255" key="2">
    <source>
        <dbReference type="PROSITE-ProRule" id="PRU01197"/>
    </source>
</evidence>
<evidence type="ECO:0000255" key="3">
    <source>
        <dbReference type="PROSITE-ProRule" id="PRU01198"/>
    </source>
</evidence>
<name>ILVC_METMA</name>
<keyword id="KW-0028">Amino-acid biosynthesis</keyword>
<keyword id="KW-0100">Branched-chain amino acid biosynthesis</keyword>
<keyword id="KW-0460">Magnesium</keyword>
<keyword id="KW-0479">Metal-binding</keyword>
<keyword id="KW-0521">NADP</keyword>
<keyword id="KW-0560">Oxidoreductase</keyword>
<gene>
    <name evidence="1" type="primary">ilvC</name>
    <name type="ordered locus">MM_0668</name>
</gene>
<comment type="function">
    <text evidence="1">Involved in the biosynthesis of branched-chain amino acids (BCAA). Catalyzes an alkyl-migration followed by a ketol-acid reduction of (S)-2-acetolactate (S2AL) to yield (R)-2,3-dihydroxy-isovalerate. In the isomerase reaction, S2AL is rearranged via a Mg-dependent methyl migration to produce 3-hydroxy-3-methyl-2-ketobutyrate (HMKB). In the reductase reaction, this 2-ketoacid undergoes a metal-dependent reduction by NADPH to yield (R)-2,3-dihydroxy-isovalerate.</text>
</comment>
<comment type="catalytic activity">
    <reaction evidence="1">
        <text>(2R)-2,3-dihydroxy-3-methylbutanoate + NADP(+) = (2S)-2-acetolactate + NADPH + H(+)</text>
        <dbReference type="Rhea" id="RHEA:22068"/>
        <dbReference type="ChEBI" id="CHEBI:15378"/>
        <dbReference type="ChEBI" id="CHEBI:49072"/>
        <dbReference type="ChEBI" id="CHEBI:57783"/>
        <dbReference type="ChEBI" id="CHEBI:58349"/>
        <dbReference type="ChEBI" id="CHEBI:58476"/>
        <dbReference type="EC" id="1.1.1.86"/>
    </reaction>
</comment>
<comment type="catalytic activity">
    <reaction evidence="1">
        <text>(2R,3R)-2,3-dihydroxy-3-methylpentanoate + NADP(+) = (S)-2-ethyl-2-hydroxy-3-oxobutanoate + NADPH + H(+)</text>
        <dbReference type="Rhea" id="RHEA:13493"/>
        <dbReference type="ChEBI" id="CHEBI:15378"/>
        <dbReference type="ChEBI" id="CHEBI:49256"/>
        <dbReference type="ChEBI" id="CHEBI:49258"/>
        <dbReference type="ChEBI" id="CHEBI:57783"/>
        <dbReference type="ChEBI" id="CHEBI:58349"/>
        <dbReference type="EC" id="1.1.1.86"/>
    </reaction>
</comment>
<comment type="cofactor">
    <cofactor evidence="1">
        <name>Mg(2+)</name>
        <dbReference type="ChEBI" id="CHEBI:18420"/>
    </cofactor>
    <text evidence="1">Binds 2 magnesium ions per subunit.</text>
</comment>
<comment type="pathway">
    <text evidence="1">Amino-acid biosynthesis; L-isoleucine biosynthesis; L-isoleucine from 2-oxobutanoate: step 2/4.</text>
</comment>
<comment type="pathway">
    <text evidence="1">Amino-acid biosynthesis; L-valine biosynthesis; L-valine from pyruvate: step 2/4.</text>
</comment>
<comment type="similarity">
    <text evidence="1">Belongs to the ketol-acid reductoisomerase family.</text>
</comment>